<evidence type="ECO:0000255" key="1">
    <source>
        <dbReference type="HAMAP-Rule" id="MF_00651"/>
    </source>
</evidence>
<gene>
    <name type="ordered locus">SAS1552</name>
</gene>
<sequence length="142" mass="15865">MLQHKILGLDVGSRTVGIAISDIMGWTAQGLDTLRINEENNELGIDQLVDIIKKHNVGTVVIGLPKNMNNSIGFRGEASLTYKEKLLEAYPSIEIVMWDERLSTMAAERSLLEADVSRQKRKQVIDKMAAVFILQGYLDSLH</sequence>
<organism>
    <name type="scientific">Staphylococcus aureus (strain MSSA476)</name>
    <dbReference type="NCBI Taxonomy" id="282459"/>
    <lineage>
        <taxon>Bacteria</taxon>
        <taxon>Bacillati</taxon>
        <taxon>Bacillota</taxon>
        <taxon>Bacilli</taxon>
        <taxon>Bacillales</taxon>
        <taxon>Staphylococcaceae</taxon>
        <taxon>Staphylococcus</taxon>
    </lineage>
</organism>
<keyword id="KW-0963">Cytoplasm</keyword>
<keyword id="KW-0378">Hydrolase</keyword>
<keyword id="KW-0540">Nuclease</keyword>
<keyword id="KW-0690">Ribosome biogenesis</keyword>
<name>YQGF_STAAS</name>
<protein>
    <recommendedName>
        <fullName evidence="1">Putative pre-16S rRNA nuclease</fullName>
        <ecNumber evidence="1">3.1.-.-</ecNumber>
    </recommendedName>
</protein>
<reference key="1">
    <citation type="journal article" date="2004" name="Proc. Natl. Acad. Sci. U.S.A.">
        <title>Complete genomes of two clinical Staphylococcus aureus strains: evidence for the rapid evolution of virulence and drug resistance.</title>
        <authorList>
            <person name="Holden M.T.G."/>
            <person name="Feil E.J."/>
            <person name="Lindsay J.A."/>
            <person name="Peacock S.J."/>
            <person name="Day N.P.J."/>
            <person name="Enright M.C."/>
            <person name="Foster T.J."/>
            <person name="Moore C.E."/>
            <person name="Hurst L."/>
            <person name="Atkin R."/>
            <person name="Barron A."/>
            <person name="Bason N."/>
            <person name="Bentley S.D."/>
            <person name="Chillingworth C."/>
            <person name="Chillingworth T."/>
            <person name="Churcher C."/>
            <person name="Clark L."/>
            <person name="Corton C."/>
            <person name="Cronin A."/>
            <person name="Doggett J."/>
            <person name="Dowd L."/>
            <person name="Feltwell T."/>
            <person name="Hance Z."/>
            <person name="Harris B."/>
            <person name="Hauser H."/>
            <person name="Holroyd S."/>
            <person name="Jagels K."/>
            <person name="James K.D."/>
            <person name="Lennard N."/>
            <person name="Line A."/>
            <person name="Mayes R."/>
            <person name="Moule S."/>
            <person name="Mungall K."/>
            <person name="Ormond D."/>
            <person name="Quail M.A."/>
            <person name="Rabbinowitsch E."/>
            <person name="Rutherford K.M."/>
            <person name="Sanders M."/>
            <person name="Sharp S."/>
            <person name="Simmonds M."/>
            <person name="Stevens K."/>
            <person name="Whitehead S."/>
            <person name="Barrell B.G."/>
            <person name="Spratt B.G."/>
            <person name="Parkhill J."/>
        </authorList>
    </citation>
    <scope>NUCLEOTIDE SEQUENCE [LARGE SCALE GENOMIC DNA]</scope>
    <source>
        <strain>MSSA476</strain>
    </source>
</reference>
<comment type="function">
    <text evidence="1">Could be a nuclease involved in processing of the 5'-end of pre-16S rRNA.</text>
</comment>
<comment type="subcellular location">
    <subcellularLocation>
        <location evidence="1">Cytoplasm</location>
    </subcellularLocation>
</comment>
<comment type="similarity">
    <text evidence="1">Belongs to the YqgF nuclease family.</text>
</comment>
<dbReference type="EC" id="3.1.-.-" evidence="1"/>
<dbReference type="EMBL" id="BX571857">
    <property type="protein sequence ID" value="CAG43353.1"/>
    <property type="molecule type" value="Genomic_DNA"/>
</dbReference>
<dbReference type="SMR" id="Q6G8V3"/>
<dbReference type="KEGG" id="sas:SAS1552"/>
<dbReference type="HOGENOM" id="CLU_098240_2_0_9"/>
<dbReference type="GO" id="GO:0005829">
    <property type="term" value="C:cytosol"/>
    <property type="evidence" value="ECO:0007669"/>
    <property type="project" value="TreeGrafter"/>
</dbReference>
<dbReference type="GO" id="GO:0004518">
    <property type="term" value="F:nuclease activity"/>
    <property type="evidence" value="ECO:0007669"/>
    <property type="project" value="UniProtKB-KW"/>
</dbReference>
<dbReference type="GO" id="GO:0000967">
    <property type="term" value="P:rRNA 5'-end processing"/>
    <property type="evidence" value="ECO:0007669"/>
    <property type="project" value="UniProtKB-UniRule"/>
</dbReference>
<dbReference type="CDD" id="cd16964">
    <property type="entry name" value="YqgF"/>
    <property type="match status" value="1"/>
</dbReference>
<dbReference type="FunFam" id="3.30.420.140:FF:000003">
    <property type="entry name" value="Putative pre-16S rRNA nuclease"/>
    <property type="match status" value="1"/>
</dbReference>
<dbReference type="Gene3D" id="3.30.420.140">
    <property type="entry name" value="YqgF/RNase H-like domain"/>
    <property type="match status" value="1"/>
</dbReference>
<dbReference type="HAMAP" id="MF_00651">
    <property type="entry name" value="Nuclease_YqgF"/>
    <property type="match status" value="1"/>
</dbReference>
<dbReference type="InterPro" id="IPR012337">
    <property type="entry name" value="RNaseH-like_sf"/>
</dbReference>
<dbReference type="InterPro" id="IPR005227">
    <property type="entry name" value="YqgF"/>
</dbReference>
<dbReference type="InterPro" id="IPR006641">
    <property type="entry name" value="YqgF/RNaseH-like_dom"/>
</dbReference>
<dbReference type="InterPro" id="IPR037027">
    <property type="entry name" value="YqgF/RNaseH-like_dom_sf"/>
</dbReference>
<dbReference type="NCBIfam" id="TIGR00250">
    <property type="entry name" value="RNAse_H_YqgF"/>
    <property type="match status" value="1"/>
</dbReference>
<dbReference type="PANTHER" id="PTHR33317">
    <property type="entry name" value="POLYNUCLEOTIDYL TRANSFERASE, RIBONUCLEASE H-LIKE SUPERFAMILY PROTEIN"/>
    <property type="match status" value="1"/>
</dbReference>
<dbReference type="PANTHER" id="PTHR33317:SF4">
    <property type="entry name" value="POLYNUCLEOTIDYL TRANSFERASE, RIBONUCLEASE H-LIKE SUPERFAMILY PROTEIN"/>
    <property type="match status" value="1"/>
</dbReference>
<dbReference type="Pfam" id="PF03652">
    <property type="entry name" value="RuvX"/>
    <property type="match status" value="1"/>
</dbReference>
<dbReference type="SMART" id="SM00732">
    <property type="entry name" value="YqgFc"/>
    <property type="match status" value="1"/>
</dbReference>
<dbReference type="SUPFAM" id="SSF53098">
    <property type="entry name" value="Ribonuclease H-like"/>
    <property type="match status" value="1"/>
</dbReference>
<proteinExistence type="inferred from homology"/>
<accession>Q6G8V3</accession>
<feature type="chain" id="PRO_0000172141" description="Putative pre-16S rRNA nuclease">
    <location>
        <begin position="1"/>
        <end position="142"/>
    </location>
</feature>